<keyword id="KW-0017">Alkaloid metabolism</keyword>
<keyword id="KW-0378">Hydrolase</keyword>
<reference key="1">
    <citation type="journal article" date="2012" name="Science">
        <title>A Papaver somniferum 10-gene cluster for synthesis of the anticancer alkaloid noscapine.</title>
        <authorList>
            <person name="Winzer T."/>
            <person name="Gazda V."/>
            <person name="He Z."/>
            <person name="Kaminski F."/>
            <person name="Kern M."/>
            <person name="Larson T.R."/>
            <person name="Li Y."/>
            <person name="Meade F."/>
            <person name="Teodor R."/>
            <person name="Vaistij F.E."/>
            <person name="Walker C."/>
            <person name="Bowser T.A."/>
            <person name="Graham I.A."/>
        </authorList>
    </citation>
    <scope>NUCLEOTIDE SEQUENCE [GENOMIC DNA]</scope>
</reference>
<reference key="2">
    <citation type="journal article" date="2015" name="Nat. Chem. Biol.">
        <title>Acetylation serves as a protective group in noscapine biosynthesis in opium poppy.</title>
        <authorList>
            <person name="Dang T.T."/>
            <person name="Chen X."/>
            <person name="Facchini P.J."/>
        </authorList>
    </citation>
    <scope>FUNCTION</scope>
    <scope>CATALYTIC ACTIVITY</scope>
    <scope>BIOPHYSICOCHEMICAL PROPERTIES</scope>
</reference>
<reference key="3">
    <citation type="journal article" date="2016" name="Nat. Commun.">
        <title>Engineering biosynthesis of the anticancer alkaloid noscapine in yeast.</title>
        <authorList>
            <person name="Li Y."/>
            <person name="Smolke C.D."/>
        </authorList>
    </citation>
    <scope>FUNCTION</scope>
    <scope>CATALYTIC ACTIVITY</scope>
</reference>
<reference key="4">
    <citation type="journal article" date="2018" name="Proc. Natl. Acad. Sci. U.S.A.">
        <title>Complete biosynthesis of noscapine and halogenated alkaloids in yeast.</title>
        <authorList>
            <person name="Li Y."/>
            <person name="Li S."/>
            <person name="Thodey K."/>
            <person name="Trenchard I."/>
            <person name="Cravens A."/>
            <person name="Smolke C.D."/>
        </authorList>
    </citation>
    <scope>FUNCTION</scope>
</reference>
<dbReference type="EC" id="3.1.1.105" evidence="2 3"/>
<dbReference type="EMBL" id="JQ659006">
    <property type="protein sequence ID" value="AFB74618.1"/>
    <property type="molecule type" value="Genomic_DNA"/>
</dbReference>
<dbReference type="SMR" id="I3PLR2"/>
<dbReference type="ESTHER" id="papso-cxe1">
    <property type="family name" value="Plant_carboxylesterase"/>
</dbReference>
<dbReference type="KEGG" id="ag:AFB74618"/>
<dbReference type="OrthoDB" id="408631at2759"/>
<dbReference type="BioCyc" id="MetaCyc:MONOMER-17771"/>
<dbReference type="BRENDA" id="3.1.1.105">
    <property type="organism ID" value="4515"/>
</dbReference>
<dbReference type="SABIO-RK" id="I3PLR2"/>
<dbReference type="GO" id="GO:0016787">
    <property type="term" value="F:hydrolase activity"/>
    <property type="evidence" value="ECO:0007669"/>
    <property type="project" value="UniProtKB-KW"/>
</dbReference>
<dbReference type="GO" id="GO:0009820">
    <property type="term" value="P:alkaloid metabolic process"/>
    <property type="evidence" value="ECO:0007669"/>
    <property type="project" value="UniProtKB-KW"/>
</dbReference>
<dbReference type="Gene3D" id="3.40.50.1820">
    <property type="entry name" value="alpha/beta hydrolase"/>
    <property type="match status" value="1"/>
</dbReference>
<dbReference type="InterPro" id="IPR013094">
    <property type="entry name" value="AB_hydrolase_3"/>
</dbReference>
<dbReference type="InterPro" id="IPR029058">
    <property type="entry name" value="AB_hydrolase_fold"/>
</dbReference>
<dbReference type="InterPro" id="IPR050466">
    <property type="entry name" value="Carboxylest/Gibb_receptor"/>
</dbReference>
<dbReference type="InterPro" id="IPR002168">
    <property type="entry name" value="Lipase_GDXG_HIS_AS"/>
</dbReference>
<dbReference type="PANTHER" id="PTHR23024">
    <property type="entry name" value="ARYLACETAMIDE DEACETYLASE"/>
    <property type="match status" value="1"/>
</dbReference>
<dbReference type="PANTHER" id="PTHR23024:SF546">
    <property type="entry name" value="CARBOXYLESTERASE 120-RELATED"/>
    <property type="match status" value="1"/>
</dbReference>
<dbReference type="Pfam" id="PF07859">
    <property type="entry name" value="Abhydrolase_3"/>
    <property type="match status" value="1"/>
</dbReference>
<dbReference type="SUPFAM" id="SSF53474">
    <property type="entry name" value="alpha/beta-Hydrolases"/>
    <property type="match status" value="1"/>
</dbReference>
<dbReference type="PROSITE" id="PS01173">
    <property type="entry name" value="LIPASE_GDXG_HIS"/>
    <property type="match status" value="1"/>
</dbReference>
<proteinExistence type="evidence at protein level"/>
<sequence length="320" mass="36168">MADPYEFLMCIHNPEEDTLTRNFPIPATPLDQNTKDISLNPDRKTSLRIFRPPTKEPPVTKNKLLPIIIYFHGGGFILFNADSTMNHDFCQSIATHIPALVVSVDYRLAPENRLPAAYDDAVDALNWVKDQGLGKLNNSEVWLKEYGDFSKCFIMGCSSGANVAYHASLRAIEMDLEPAKINGLILHCPFFGSLERTESDSKVINNQDLPLAVRDVMWELALPLGSTRDHVYCNPNIDHDGSSSGNMVGLIERCFVVGFYGDPLIDRQIQLVKMLEEKGVKVETWIEQGGYHGVLCFDPMIRETFLEKLKHFILNDEFIY</sequence>
<gene>
    <name evidence="5" type="primary">CXE1</name>
</gene>
<organism>
    <name type="scientific">Papaver somniferum</name>
    <name type="common">Opium poppy</name>
    <dbReference type="NCBI Taxonomy" id="3469"/>
    <lineage>
        <taxon>Eukaryota</taxon>
        <taxon>Viridiplantae</taxon>
        <taxon>Streptophyta</taxon>
        <taxon>Embryophyta</taxon>
        <taxon>Tracheophyta</taxon>
        <taxon>Spermatophyta</taxon>
        <taxon>Magnoliopsida</taxon>
        <taxon>Ranunculales</taxon>
        <taxon>Papaveraceae</taxon>
        <taxon>Papaveroideae</taxon>
        <taxon>Papaver</taxon>
    </lineage>
</organism>
<evidence type="ECO:0000250" key="1">
    <source>
        <dbReference type="UniProtKB" id="Q5NUF3"/>
    </source>
</evidence>
<evidence type="ECO:0000269" key="2">
    <source>
    </source>
</evidence>
<evidence type="ECO:0000269" key="3">
    <source>
    </source>
</evidence>
<evidence type="ECO:0000269" key="4">
    <source>
    </source>
</evidence>
<evidence type="ECO:0000303" key="5">
    <source>
    </source>
</evidence>
<evidence type="ECO:0000305" key="6"/>
<evidence type="ECO:0000305" key="7">
    <source>
    </source>
</evidence>
<feature type="chain" id="PRO_0000447602" description="3-O-acetylpapaveroxine carboxylesterase CXE1">
    <location>
        <begin position="1"/>
        <end position="320"/>
    </location>
</feature>
<feature type="short sequence motif" description="Involved in the stabilization of the negatively charged intermediate by the formation of the oxyanion hole" evidence="1">
    <location>
        <begin position="72"/>
        <end position="74"/>
    </location>
</feature>
<feature type="active site" evidence="1">
    <location>
        <position position="158"/>
    </location>
</feature>
<feature type="active site" evidence="1">
    <location>
        <position position="262"/>
    </location>
</feature>
<feature type="active site" evidence="1">
    <location>
        <position position="292"/>
    </location>
</feature>
<comment type="function">
    <text evidence="2 3 4">Carboxylesterase involved in the biosynthesis of the benzylisoquinoline alkaloid noscapine (PubMed:25485687, PubMed:27378283, PubMed:29610307). Converts 3-O-acetylpapaveroxine to papaveroxine which spontaneously rearranges to narcotine hemiacetal (PubMed:25485687, PubMed:27378283).</text>
</comment>
<comment type="catalytic activity">
    <reaction evidence="2 3">
        <text>3-O-acetylpapaveroxine + H2O = narcotine hemiacetal + acetate + H(+)</text>
        <dbReference type="Rhea" id="RHEA:57400"/>
        <dbReference type="ChEBI" id="CHEBI:15377"/>
        <dbReference type="ChEBI" id="CHEBI:15378"/>
        <dbReference type="ChEBI" id="CHEBI:30089"/>
        <dbReference type="ChEBI" id="CHEBI:141645"/>
        <dbReference type="ChEBI" id="CHEBI:141667"/>
        <dbReference type="EC" id="3.1.1.105"/>
    </reaction>
    <physiologicalReaction direction="left-to-right" evidence="7">
        <dbReference type="Rhea" id="RHEA:57401"/>
    </physiologicalReaction>
</comment>
<comment type="biophysicochemical properties">
    <kinetics>
        <KM evidence="2">47 uM for 3-O-acetylpapaveroxine</KM>
        <Vmax evidence="2">336.0 nmol/min/mg enzyme with 3-O-acetylpapaveroxine as substrate</Vmax>
    </kinetics>
</comment>
<comment type="pathway">
    <text evidence="6">Alkaloid biosynthesis.</text>
</comment>
<comment type="similarity">
    <text evidence="6">Belongs to the 'GDXG' lipolytic enzyme family.</text>
</comment>
<accession>I3PLR2</accession>
<name>CXE1_PAPSO</name>
<protein>
    <recommendedName>
        <fullName evidence="6">3-O-acetylpapaveroxine carboxylesterase CXE1</fullName>
        <ecNumber evidence="2 3">3.1.1.105</ecNumber>
    </recommendedName>
    <alternativeName>
        <fullName evidence="5">Carboxylesterase 1</fullName>
    </alternativeName>
</protein>